<sequence>MPIIIDKDLPARKVLQKENIFVMTKERAETQDIRALKIAILNLMPTKQDTEAQLLRLIGNTPLQLDVHLLHMESHLSRNVTQEHLTSFYKTFRDIENEKFDGLIITGAPVETLAFEEVDYWEELKHIMEYSKTNVTSTLHICWGAQAGLYYHYGVPKYPLKEKMFGVFEHEVCEQHVKLLQGFDELFFAPHSRHTEVRENDIREVKELTLLANSEEAGVHLVIGPEGRQVFALGHSEYSCETLKQEYERDRDKGLNIDVPKNYFKHNNPDEKPLVRWRSHGNLLFSNWLNYYVYQETPYIL</sequence>
<accession>Q814M3</accession>
<name>METAA_BACCR</name>
<gene>
    <name evidence="1 3" type="primary">metAA</name>
    <name type="ordered locus">BC_5405</name>
</gene>
<dbReference type="EC" id="2.3.1.31" evidence="1 2"/>
<dbReference type="EMBL" id="AE016877">
    <property type="protein sequence ID" value="AAP12267.1"/>
    <property type="status" value="ALT_INIT"/>
    <property type="molecule type" value="Genomic_DNA"/>
</dbReference>
<dbReference type="RefSeq" id="NP_835066.1">
    <property type="nucleotide sequence ID" value="NC_004722.1"/>
</dbReference>
<dbReference type="SMR" id="Q814M3"/>
<dbReference type="STRING" id="226900.BC_5405"/>
<dbReference type="KEGG" id="bce:BC5405"/>
<dbReference type="PATRIC" id="fig|226900.8.peg.5583"/>
<dbReference type="HOGENOM" id="CLU_057851_0_1_9"/>
<dbReference type="OrthoDB" id="9772423at2"/>
<dbReference type="UniPathway" id="UPA00051">
    <property type="reaction ID" value="UER00074"/>
</dbReference>
<dbReference type="Proteomes" id="UP000001417">
    <property type="component" value="Chromosome"/>
</dbReference>
<dbReference type="GO" id="GO:0005737">
    <property type="term" value="C:cytoplasm"/>
    <property type="evidence" value="ECO:0007669"/>
    <property type="project" value="UniProtKB-SubCell"/>
</dbReference>
<dbReference type="GO" id="GO:0004414">
    <property type="term" value="F:homoserine O-acetyltransferase activity"/>
    <property type="evidence" value="ECO:0007669"/>
    <property type="project" value="UniProtKB-EC"/>
</dbReference>
<dbReference type="GO" id="GO:0008899">
    <property type="term" value="F:homoserine O-succinyltransferase activity"/>
    <property type="evidence" value="ECO:0000318"/>
    <property type="project" value="GO_Central"/>
</dbReference>
<dbReference type="GO" id="GO:0019281">
    <property type="term" value="P:L-methionine biosynthetic process from homoserine via O-succinyl-L-homoserine and cystathionine"/>
    <property type="evidence" value="ECO:0007669"/>
    <property type="project" value="InterPro"/>
</dbReference>
<dbReference type="CDD" id="cd03131">
    <property type="entry name" value="GATase1_HTS"/>
    <property type="match status" value="1"/>
</dbReference>
<dbReference type="FunFam" id="3.40.50.880:FF:000004">
    <property type="entry name" value="Homoserine O-succinyltransferase"/>
    <property type="match status" value="1"/>
</dbReference>
<dbReference type="Gene3D" id="3.40.50.880">
    <property type="match status" value="1"/>
</dbReference>
<dbReference type="HAMAP" id="MF_00295">
    <property type="entry name" value="MetA_acyltransf"/>
    <property type="match status" value="1"/>
</dbReference>
<dbReference type="InterPro" id="IPR029062">
    <property type="entry name" value="Class_I_gatase-like"/>
</dbReference>
<dbReference type="InterPro" id="IPR005697">
    <property type="entry name" value="HST_MetA"/>
</dbReference>
<dbReference type="InterPro" id="IPR033752">
    <property type="entry name" value="MetA_family"/>
</dbReference>
<dbReference type="NCBIfam" id="TIGR01001">
    <property type="entry name" value="metA"/>
    <property type="match status" value="1"/>
</dbReference>
<dbReference type="PANTHER" id="PTHR20919">
    <property type="entry name" value="HOMOSERINE O-SUCCINYLTRANSFERASE"/>
    <property type="match status" value="1"/>
</dbReference>
<dbReference type="PANTHER" id="PTHR20919:SF0">
    <property type="entry name" value="HOMOSERINE O-SUCCINYLTRANSFERASE"/>
    <property type="match status" value="1"/>
</dbReference>
<dbReference type="Pfam" id="PF04204">
    <property type="entry name" value="HTS"/>
    <property type="match status" value="1"/>
</dbReference>
<dbReference type="PIRSF" id="PIRSF000450">
    <property type="entry name" value="H_ser_succinyltr"/>
    <property type="match status" value="1"/>
</dbReference>
<dbReference type="SUPFAM" id="SSF52317">
    <property type="entry name" value="Class I glutamine amidotransferase-like"/>
    <property type="match status" value="1"/>
</dbReference>
<reference key="1">
    <citation type="journal article" date="2003" name="Nature">
        <title>Genome sequence of Bacillus cereus and comparative analysis with Bacillus anthracis.</title>
        <authorList>
            <person name="Ivanova N."/>
            <person name="Sorokin A."/>
            <person name="Anderson I."/>
            <person name="Galleron N."/>
            <person name="Candelon B."/>
            <person name="Kapatral V."/>
            <person name="Bhattacharyya A."/>
            <person name="Reznik G."/>
            <person name="Mikhailova N."/>
            <person name="Lapidus A."/>
            <person name="Chu L."/>
            <person name="Mazur M."/>
            <person name="Goltsman E."/>
            <person name="Larsen N."/>
            <person name="D'Souza M."/>
            <person name="Walunas T."/>
            <person name="Grechkin Y."/>
            <person name="Pusch G."/>
            <person name="Haselkorn R."/>
            <person name="Fonstein M."/>
            <person name="Ehrlich S.D."/>
            <person name="Overbeek R."/>
            <person name="Kyrpides N.C."/>
        </authorList>
    </citation>
    <scope>NUCLEOTIDE SEQUENCE [LARGE SCALE GENOMIC DNA]</scope>
    <source>
        <strain>ATCC 14579 / DSM 31 / CCUG 7414 / JCM 2152 / NBRC 15305 / NCIMB 9373 / NCTC 2599 / NRRL B-3711</strain>
    </source>
</reference>
<reference key="2">
    <citation type="journal article" date="2017" name="Nat. Chem. Biol.">
        <title>Parallel evolution of non-homologous isofunctional enzymes in methionine biosynthesis.</title>
        <authorList>
            <person name="Bastard K."/>
            <person name="Perret A."/>
            <person name="Mariage A."/>
            <person name="Bessonnet T."/>
            <person name="Pinet-Turpault A."/>
            <person name="Petit J.L."/>
            <person name="Darii E."/>
            <person name="Bazire P."/>
            <person name="Vergne-Vaxelaire C."/>
            <person name="Brewee C."/>
            <person name="Debard A."/>
            <person name="Pellouin V."/>
            <person name="Besnard-Gonnet M."/>
            <person name="Artiguenave F."/>
            <person name="Medigue C."/>
            <person name="Vallenet D."/>
            <person name="Danchin A."/>
            <person name="Zaparucha A."/>
            <person name="Weissenbach J."/>
            <person name="Salanoubat M."/>
            <person name="de Berardinis V."/>
        </authorList>
    </citation>
    <scope>FUNCTION</scope>
    <scope>CATALYTIC ACTIVITY</scope>
</reference>
<proteinExistence type="evidence at protein level"/>
<evidence type="ECO:0000255" key="1">
    <source>
        <dbReference type="HAMAP-Rule" id="MF_00295"/>
    </source>
</evidence>
<evidence type="ECO:0000269" key="2">
    <source>
    </source>
</evidence>
<evidence type="ECO:0000303" key="3">
    <source>
    </source>
</evidence>
<evidence type="ECO:0000305" key="4"/>
<organism>
    <name type="scientific">Bacillus cereus (strain ATCC 14579 / DSM 31 / CCUG 7414 / JCM 2152 / NBRC 15305 / NCIMB 9373 / NCTC 2599 / NRRL B-3711)</name>
    <dbReference type="NCBI Taxonomy" id="226900"/>
    <lineage>
        <taxon>Bacteria</taxon>
        <taxon>Bacillati</taxon>
        <taxon>Bacillota</taxon>
        <taxon>Bacilli</taxon>
        <taxon>Bacillales</taxon>
        <taxon>Bacillaceae</taxon>
        <taxon>Bacillus</taxon>
        <taxon>Bacillus cereus group</taxon>
    </lineage>
</organism>
<protein>
    <recommendedName>
        <fullName evidence="1">Homoserine O-acetyltransferase</fullName>
        <shortName evidence="1 3">HAT</shortName>
        <ecNumber evidence="1 2">2.3.1.31</ecNumber>
    </recommendedName>
    <alternativeName>
        <fullName evidence="1">Homoserine transacetylase</fullName>
        <shortName evidence="1">HTA</shortName>
    </alternativeName>
</protein>
<feature type="chain" id="PRO_0000199737" description="Homoserine O-acetyltransferase">
    <location>
        <begin position="1"/>
        <end position="301"/>
    </location>
</feature>
<feature type="active site" description="Acyl-thioester intermediate" evidence="1">
    <location>
        <position position="142"/>
    </location>
</feature>
<feature type="active site" description="Proton acceptor" evidence="1">
    <location>
        <position position="235"/>
    </location>
</feature>
<feature type="active site" evidence="1">
    <location>
        <position position="237"/>
    </location>
</feature>
<feature type="binding site" evidence="1">
    <location>
        <position position="163"/>
    </location>
    <ligand>
        <name>substrate</name>
    </ligand>
</feature>
<feature type="binding site" evidence="1">
    <location>
        <position position="192"/>
    </location>
    <ligand>
        <name>substrate</name>
    </ligand>
</feature>
<feature type="binding site" evidence="1">
    <location>
        <position position="249"/>
    </location>
    <ligand>
        <name>substrate</name>
    </ligand>
</feature>
<feature type="site" description="Important for acyl-CoA specificity" evidence="1">
    <location>
        <position position="111"/>
    </location>
</feature>
<feature type="site" description="Important for substrate specificity" evidence="1">
    <location>
        <position position="192"/>
    </location>
</feature>
<keyword id="KW-0012">Acyltransferase</keyword>
<keyword id="KW-0028">Amino-acid biosynthesis</keyword>
<keyword id="KW-0963">Cytoplasm</keyword>
<keyword id="KW-0486">Methionine biosynthesis</keyword>
<keyword id="KW-1185">Reference proteome</keyword>
<keyword id="KW-0808">Transferase</keyword>
<comment type="function">
    <text evidence="1 2">Transfers an acetyl group from acetyl-CoA to L-homoserine, forming acetyl-L-homoserine.</text>
</comment>
<comment type="catalytic activity">
    <reaction evidence="1 2">
        <text>L-homoserine + acetyl-CoA = O-acetyl-L-homoserine + CoA</text>
        <dbReference type="Rhea" id="RHEA:13701"/>
        <dbReference type="ChEBI" id="CHEBI:57287"/>
        <dbReference type="ChEBI" id="CHEBI:57288"/>
        <dbReference type="ChEBI" id="CHEBI:57476"/>
        <dbReference type="ChEBI" id="CHEBI:57716"/>
        <dbReference type="EC" id="2.3.1.31"/>
    </reaction>
</comment>
<comment type="pathway">
    <text evidence="1">Amino-acid biosynthesis; L-methionine biosynthesis via de novo pathway; O-acetyl-L-homoserine from L-homoserine: step 1/1.</text>
</comment>
<comment type="subcellular location">
    <subcellularLocation>
        <location evidence="1">Cytoplasm</location>
    </subcellularLocation>
</comment>
<comment type="similarity">
    <text evidence="1">Belongs to the MetA family.</text>
</comment>
<comment type="sequence caution" evidence="4">
    <conflict type="erroneous initiation">
        <sequence resource="EMBL-CDS" id="AAP12267"/>
    </conflict>
</comment>